<protein>
    <recommendedName>
        <fullName evidence="10">Cytochrome P450 4F8</fullName>
        <ecNumber evidence="6 8 9">1.14.14.1</ecNumber>
    </recommendedName>
    <alternativeName>
        <fullName>CYPIVF8</fullName>
    </alternativeName>
</protein>
<reference key="1">
    <citation type="journal article" date="1999" name="Biochem. Biophys. Res. Commun.">
        <title>Gene expression of a novel cytochrome P450 of the CYP4F subfamily in human seminal vesicles.</title>
        <authorList>
            <person name="Bylund J."/>
            <person name="Finnstroem N."/>
            <person name="Oliw E.H."/>
        </authorList>
    </citation>
    <scope>NUCLEOTIDE SEQUENCE [MRNA]</scope>
    <scope>TISSUE SPECIFICITY</scope>
    <source>
        <tissue>Seminal vesicle</tissue>
    </source>
</reference>
<reference key="2">
    <citation type="journal article" date="2000" name="J. Biol. Chem.">
        <title>Identification of CYP4F8 in human seminal vesicles as a prominent 19-hydroxylase of prostaglandin endoperoxides.</title>
        <authorList>
            <person name="Bylund J."/>
            <person name="Hidestrand M."/>
            <person name="Ingelman-Sundberg M."/>
            <person name="Oliw E.H."/>
        </authorList>
    </citation>
    <scope>FUNCTION</scope>
    <scope>CATALYTIC ACTIVITY</scope>
    <scope>PATHWAY</scope>
</reference>
<reference key="3">
    <citation type="journal article" date="2003" name="Arch. Biochem. Biophys.">
        <title>Expression of CYP4F8 (prostaglandin H 19-hydroxylase) in human epithelia and prominent induction in epidermis of psoriatic lesions.</title>
        <authorList>
            <person name="Stark K."/>
            <person name="Toermae H."/>
            <person name="Cristea M."/>
            <person name="Oliw E.H."/>
        </authorList>
    </citation>
    <scope>TISSUE SPECIFICITY</scope>
</reference>
<reference key="4">
    <citation type="journal article" date="2005" name="Arch. Biochem. Biophys.">
        <title>Oxygenation of polyunsaturated long chain fatty acids by recombinant CYP4F8 and CYP4F12 and catalytic importance of Tyr-125 and Gly-328 of CYP4F8.</title>
        <authorList>
            <person name="Stark K."/>
            <person name="Wongsud B."/>
            <person name="Burman R."/>
            <person name="Oliw E.H."/>
        </authorList>
    </citation>
    <scope>FUNCTION</scope>
    <scope>CATALYTIC ACTIVITY</scope>
    <scope>VARIANT PHE-125</scope>
    <scope>MUTAGENESIS OF GLY-328</scope>
</reference>
<reference key="5">
    <citation type="journal article" date="2005" name="Prostaglandins Other Lipid Mediat.">
        <title>On the mechanism of biosynthesis of 19-hydroxyprostaglandins of human seminal fluid and expression of cyclooxygenase-2, PGH 19-hydroxylase (CYP4F8) and microsomal PGE synthase-1 in seminal vesicles and vas deferens.</title>
        <authorList>
            <person name="Stark K."/>
            <person name="Bylund J."/>
            <person name="Toermae H."/>
            <person name="Sahlen G."/>
            <person name="Oliw E.H."/>
        </authorList>
    </citation>
    <scope>FUNCTION</scope>
    <scope>CATALYTIC ACTIVITY</scope>
    <scope>TISSUE SPECIFICITY</scope>
</reference>
<name>CP4F8_HUMAN</name>
<proteinExistence type="evidence at protein level"/>
<sequence>MSLLSLSWLGLRPVAASPWLLLLVVGASWLLARILAWTYAFYHNGRRLRCFPQPRKQNWFLGHLGLVTPTEEGLRVLTQLVATYPQGFVRWLGPITPIINLCHPDIVRSVINTSDAITDKDIVFYKTLKPWLGDGLLLSVGDKWRHHRRLLTPAFHFNILKPYIKIFSKSANIMHAKWQRLAMEGSTCLDVFEHISLMTLDSLQKCIFSFDSNCQEKPSEYITAIMELSALVVKRNNQFFRYKDFLYFLTPCGRRFHRACRLVHDFTDAVIQERRRTLTSQGVDDFLQAKAKSKTLDFIDVLLLSEDKNGKELSDEDIRAEADTFMFGGHDTTASGLSWVLYNLARHPEYQERCRQEVQELLKDREPKEIEWDDLAQLPFLTMCLKESLRLHPPIPTFARGCTQDVVLPDSRVIPKGNVCNINIFAIHHNPSVWPDPEVYDPFRFDPENAQKRSPMAFIPFSAGPRNCIGQKFAMAEMKVVLALTLLRFRILPDHREPRRTPEIVLRAEDGLWLRVEPLG</sequence>
<evidence type="ECO:0000250" key="1"/>
<evidence type="ECO:0000250" key="2">
    <source>
        <dbReference type="UniProtKB" id="Q02928"/>
    </source>
</evidence>
<evidence type="ECO:0000250" key="3">
    <source>
        <dbReference type="UniProtKB" id="Q9HBI6"/>
    </source>
</evidence>
<evidence type="ECO:0000255" key="4"/>
<evidence type="ECO:0000269" key="5">
    <source>
    </source>
</evidence>
<evidence type="ECO:0000269" key="6">
    <source>
    </source>
</evidence>
<evidence type="ECO:0000269" key="7">
    <source>
    </source>
</evidence>
<evidence type="ECO:0000269" key="8">
    <source>
    </source>
</evidence>
<evidence type="ECO:0000269" key="9">
    <source>
    </source>
</evidence>
<evidence type="ECO:0000303" key="10">
    <source>
    </source>
</evidence>
<evidence type="ECO:0000305" key="11"/>
<evidence type="ECO:0000305" key="12">
    <source>
    </source>
</evidence>
<evidence type="ECO:0000305" key="13">
    <source>
    </source>
</evidence>
<evidence type="ECO:0000305" key="14">
    <source>
    </source>
</evidence>
<evidence type="ECO:0000312" key="15">
    <source>
        <dbReference type="HGNC" id="HGNC:2648"/>
    </source>
</evidence>
<accession>P98187</accession>
<keyword id="KW-0256">Endoplasmic reticulum</keyword>
<keyword id="KW-0276">Fatty acid metabolism</keyword>
<keyword id="KW-0349">Heme</keyword>
<keyword id="KW-0408">Iron</keyword>
<keyword id="KW-0443">Lipid metabolism</keyword>
<keyword id="KW-0472">Membrane</keyword>
<keyword id="KW-0479">Metal-binding</keyword>
<keyword id="KW-0492">Microsome</keyword>
<keyword id="KW-0503">Monooxygenase</keyword>
<keyword id="KW-0560">Oxidoreductase</keyword>
<keyword id="KW-1267">Proteomics identification</keyword>
<keyword id="KW-1185">Reference proteome</keyword>
<keyword id="KW-0812">Transmembrane</keyword>
<keyword id="KW-1133">Transmembrane helix</keyword>
<gene>
    <name evidence="10 15" type="primary">CYP4F8</name>
</gene>
<dbReference type="EC" id="1.14.14.1" evidence="6 8 9"/>
<dbReference type="EMBL" id="AF133298">
    <property type="protein sequence ID" value="AAD49566.1"/>
    <property type="molecule type" value="mRNA"/>
</dbReference>
<dbReference type="CCDS" id="CCDS74303.1"/>
<dbReference type="RefSeq" id="NP_009184.1">
    <property type="nucleotide sequence ID" value="NM_007253.4"/>
</dbReference>
<dbReference type="SMR" id="P98187"/>
<dbReference type="BioGRID" id="116439">
    <property type="interactions" value="10"/>
</dbReference>
<dbReference type="FunCoup" id="P98187">
    <property type="interactions" value="213"/>
</dbReference>
<dbReference type="IntAct" id="P98187">
    <property type="interactions" value="9"/>
</dbReference>
<dbReference type="MINT" id="P98187"/>
<dbReference type="STRING" id="9606.ENSP00000477567"/>
<dbReference type="BindingDB" id="P98187"/>
<dbReference type="ChEMBL" id="CHEMBL4523270"/>
<dbReference type="SwissLipids" id="SLP:000001467"/>
<dbReference type="iPTMnet" id="P98187"/>
<dbReference type="PhosphoSitePlus" id="P98187"/>
<dbReference type="BioMuta" id="CYP4F8"/>
<dbReference type="DMDM" id="10719963"/>
<dbReference type="jPOST" id="P98187"/>
<dbReference type="MassIVE" id="P98187"/>
<dbReference type="PaxDb" id="9606-ENSP00000477567"/>
<dbReference type="PeptideAtlas" id="P98187"/>
<dbReference type="ProteomicsDB" id="57819"/>
<dbReference type="Antibodypedia" id="43609">
    <property type="antibodies" value="50 antibodies from 23 providers"/>
</dbReference>
<dbReference type="DNASU" id="11283"/>
<dbReference type="Ensembl" id="ENST00000612078.5">
    <property type="protein sequence ID" value="ENSP00000477567.1"/>
    <property type="gene ID" value="ENSG00000186526.13"/>
</dbReference>
<dbReference type="GeneID" id="11283"/>
<dbReference type="KEGG" id="hsa:11283"/>
<dbReference type="MANE-Select" id="ENST00000612078.5">
    <property type="protein sequence ID" value="ENSP00000477567.1"/>
    <property type="RefSeq nucleotide sequence ID" value="NM_007253.4"/>
    <property type="RefSeq protein sequence ID" value="NP_009184.1"/>
</dbReference>
<dbReference type="UCSC" id="uc032hoh.2">
    <property type="organism name" value="human"/>
</dbReference>
<dbReference type="AGR" id="HGNC:2648"/>
<dbReference type="CTD" id="11283"/>
<dbReference type="DisGeNET" id="11283"/>
<dbReference type="GeneCards" id="CYP4F8"/>
<dbReference type="HGNC" id="HGNC:2648">
    <property type="gene designation" value="CYP4F8"/>
</dbReference>
<dbReference type="HPA" id="ENSG00000186526">
    <property type="expression patterns" value="Tissue enriched (seminal)"/>
</dbReference>
<dbReference type="MIM" id="611545">
    <property type="type" value="gene"/>
</dbReference>
<dbReference type="neXtProt" id="NX_P98187"/>
<dbReference type="OpenTargets" id="ENSG00000186526"/>
<dbReference type="PharmGKB" id="PA405"/>
<dbReference type="VEuPathDB" id="HostDB:ENSG00000186526"/>
<dbReference type="eggNOG" id="KOG0157">
    <property type="taxonomic scope" value="Eukaryota"/>
</dbReference>
<dbReference type="GeneTree" id="ENSGT00940000155021"/>
<dbReference type="HOGENOM" id="CLU_001570_5_1_1"/>
<dbReference type="InParanoid" id="P98187"/>
<dbReference type="OMA" id="AAFAMME"/>
<dbReference type="OrthoDB" id="1470350at2759"/>
<dbReference type="PAN-GO" id="P98187">
    <property type="GO annotations" value="0 GO annotations based on evolutionary models"/>
</dbReference>
<dbReference type="PhylomeDB" id="P98187"/>
<dbReference type="BRENDA" id="1.14.14.B9">
    <property type="organism ID" value="2681"/>
</dbReference>
<dbReference type="PathwayCommons" id="P98187"/>
<dbReference type="Reactome" id="R-HSA-211935">
    <property type="pathway name" value="Fatty acids"/>
</dbReference>
<dbReference type="Reactome" id="R-HSA-211979">
    <property type="pathway name" value="Eicosanoids"/>
</dbReference>
<dbReference type="Reactome" id="R-HSA-2142691">
    <property type="pathway name" value="Synthesis of Leukotrienes (LT) and Eoxins (EX)"/>
</dbReference>
<dbReference type="SABIO-RK" id="P98187"/>
<dbReference type="SignaLink" id="P98187"/>
<dbReference type="UniPathway" id="UPA00199"/>
<dbReference type="BioGRID-ORCS" id="11283">
    <property type="hits" value="9 hits in 266 CRISPR screens"/>
</dbReference>
<dbReference type="ChiTaRS" id="CYP4F8">
    <property type="organism name" value="human"/>
</dbReference>
<dbReference type="GeneWiki" id="CYP4F8"/>
<dbReference type="GenomeRNAi" id="11283"/>
<dbReference type="Pharos" id="P98187">
    <property type="development level" value="Tbio"/>
</dbReference>
<dbReference type="PRO" id="PR:P98187"/>
<dbReference type="Proteomes" id="UP000005640">
    <property type="component" value="Chromosome 19"/>
</dbReference>
<dbReference type="RNAct" id="P98187">
    <property type="molecule type" value="protein"/>
</dbReference>
<dbReference type="Bgee" id="ENSG00000186526">
    <property type="expression patterns" value="Expressed in seminal vesicle and 99 other cell types or tissues"/>
</dbReference>
<dbReference type="ExpressionAtlas" id="P98187">
    <property type="expression patterns" value="baseline and differential"/>
</dbReference>
<dbReference type="GO" id="GO:0005789">
    <property type="term" value="C:endoplasmic reticulum membrane"/>
    <property type="evidence" value="ECO:0000304"/>
    <property type="project" value="Reactome"/>
</dbReference>
<dbReference type="GO" id="GO:0018685">
    <property type="term" value="F:alkane 1-monooxygenase activity"/>
    <property type="evidence" value="ECO:0000304"/>
    <property type="project" value="ProtInc"/>
</dbReference>
<dbReference type="GO" id="GO:0020037">
    <property type="term" value="F:heme binding"/>
    <property type="evidence" value="ECO:0007669"/>
    <property type="project" value="InterPro"/>
</dbReference>
<dbReference type="GO" id="GO:0005506">
    <property type="term" value="F:iron ion binding"/>
    <property type="evidence" value="ECO:0007669"/>
    <property type="project" value="InterPro"/>
</dbReference>
<dbReference type="GO" id="GO:0004497">
    <property type="term" value="F:monooxygenase activity"/>
    <property type="evidence" value="ECO:0000304"/>
    <property type="project" value="Reactome"/>
</dbReference>
<dbReference type="GO" id="GO:0016712">
    <property type="term" value="F:oxidoreductase activity, acting on paired donors, with incorporation or reduction of molecular oxygen, reduced flavin or flavoprotein as one donor, and incorporation of one atom of oxygen"/>
    <property type="evidence" value="ECO:0007669"/>
    <property type="project" value="UniProtKB-EC"/>
</dbReference>
<dbReference type="GO" id="GO:0019369">
    <property type="term" value="P:arachidonate metabolic process"/>
    <property type="evidence" value="ECO:0000318"/>
    <property type="project" value="GO_Central"/>
</dbReference>
<dbReference type="GO" id="GO:0006690">
    <property type="term" value="P:icosanoid metabolic process"/>
    <property type="evidence" value="ECO:0000304"/>
    <property type="project" value="Reactome"/>
</dbReference>
<dbReference type="GO" id="GO:0042361">
    <property type="term" value="P:menaquinone catabolic process"/>
    <property type="evidence" value="ECO:0000318"/>
    <property type="project" value="GO_Central"/>
</dbReference>
<dbReference type="GO" id="GO:0042376">
    <property type="term" value="P:phylloquinone catabolic process"/>
    <property type="evidence" value="ECO:0000318"/>
    <property type="project" value="GO_Central"/>
</dbReference>
<dbReference type="GO" id="GO:0006693">
    <property type="term" value="P:prostaglandin metabolic process"/>
    <property type="evidence" value="ECO:0000304"/>
    <property type="project" value="ProtInc"/>
</dbReference>
<dbReference type="CDD" id="cd20679">
    <property type="entry name" value="CYP4F"/>
    <property type="match status" value="1"/>
</dbReference>
<dbReference type="FunFam" id="1.10.630.10:FF:000005">
    <property type="entry name" value="cytochrome P450 4F22 isoform X2"/>
    <property type="match status" value="1"/>
</dbReference>
<dbReference type="Gene3D" id="1.10.630.10">
    <property type="entry name" value="Cytochrome P450"/>
    <property type="match status" value="1"/>
</dbReference>
<dbReference type="InterPro" id="IPR001128">
    <property type="entry name" value="Cyt_P450"/>
</dbReference>
<dbReference type="InterPro" id="IPR017972">
    <property type="entry name" value="Cyt_P450_CS"/>
</dbReference>
<dbReference type="InterPro" id="IPR002401">
    <property type="entry name" value="Cyt_P450_E_grp-I"/>
</dbReference>
<dbReference type="InterPro" id="IPR036396">
    <property type="entry name" value="Cyt_P450_sf"/>
</dbReference>
<dbReference type="InterPro" id="IPR050196">
    <property type="entry name" value="Cytochrome_P450_Monoox"/>
</dbReference>
<dbReference type="PANTHER" id="PTHR24291:SF192">
    <property type="entry name" value="CYTOCHROME P450 4F8"/>
    <property type="match status" value="1"/>
</dbReference>
<dbReference type="PANTHER" id="PTHR24291">
    <property type="entry name" value="CYTOCHROME P450 FAMILY 4"/>
    <property type="match status" value="1"/>
</dbReference>
<dbReference type="Pfam" id="PF00067">
    <property type="entry name" value="p450"/>
    <property type="match status" value="1"/>
</dbReference>
<dbReference type="PRINTS" id="PR00463">
    <property type="entry name" value="EP450I"/>
</dbReference>
<dbReference type="PRINTS" id="PR00385">
    <property type="entry name" value="P450"/>
</dbReference>
<dbReference type="SUPFAM" id="SSF48264">
    <property type="entry name" value="Cytochrome P450"/>
    <property type="match status" value="1"/>
</dbReference>
<dbReference type="PROSITE" id="PS00086">
    <property type="entry name" value="CYTOCHROME_P450"/>
    <property type="match status" value="1"/>
</dbReference>
<feature type="chain" id="PRO_0000051855" description="Cytochrome P450 4F8">
    <location>
        <begin position="1"/>
        <end position="520"/>
    </location>
</feature>
<feature type="transmembrane region" description="Helical" evidence="4">
    <location>
        <begin position="15"/>
        <end position="37"/>
    </location>
</feature>
<feature type="binding site" description="axial binding residue" evidence="1">
    <location>
        <position position="468"/>
    </location>
    <ligand>
        <name>heme</name>
        <dbReference type="ChEBI" id="CHEBI:30413"/>
    </ligand>
    <ligandPart>
        <name>Fe</name>
        <dbReference type="ChEBI" id="CHEBI:18248"/>
    </ligandPart>
</feature>
<feature type="sequence variant" id="VAR_038347" description="No effect on U-44069 and 9,11-diazo-prostadienoic acid (U-51605) hydroxylation; loss of 20:4n-6 or 22:5n-6 oxidation; dbSNP:rs2072600." evidence="9">
    <original>Y</original>
    <variation>F</variation>
    <location>
        <position position="125"/>
    </location>
</feature>
<feature type="sequence variant" id="VAR_038348" description="In dbSNP:rs2056822.">
    <original>P</original>
    <variation>Q</variation>
    <location>
        <position position="447"/>
    </location>
</feature>
<feature type="mutagenesis site" description="No effect on U-44069 and U-51605 hydroxylation. 20:4n-6 hydroxylation shifted from C-18 to C-19." evidence="9">
    <original>G</original>
    <variation>E</variation>
    <location>
        <position position="328"/>
    </location>
</feature>
<comment type="function">
    <text evidence="6 8 9">A cytochrome P450 monooxygenase involved in the metabolism of endogenous polyunsaturated fatty acids (PUFAs) and their oxygenated derivatives (oxylipins). Mechanistically, uses molecular oxygen inserting one oxygen atom into a substrate, and reducing the second into a water molecule, with two electrons provided by NADPH via cytochrome P450 reductase (CPR; NADPH-ferrihemoprotein reductase). Catalyzes the hydroxylation of carbon hydrogen bonds, with preference for omega-1 and omega-2 positions (PubMed:10791960, PubMed:15789615, PubMed:16112640). Hydroxylates (5Z,8Z,11Z,14Z)-eicosatetraenoic acid (arachidonate) predominantly at omega-2 position to form (18R)-hydroxyeicosatetraenoic acid (18R-HETE) (PubMed:10791960). Exhibits omega-1 hydroxylase activity toward prostaglandin (PG) H1, PGH2 and PGI2 (PubMed:10791960, PubMed:15789615). Catalyzes the epoxidation of double bonds of PUFAs, including docosahexaenoic and docosapentaenoic acids (PubMed:16112640). Shows little activity against PGD2, PGE1, PGE2, PGF2alpha, and leukotriene B4.</text>
</comment>
<comment type="catalytic activity">
    <reaction evidence="6 8">
        <text>an organic molecule + reduced [NADPH--hemoprotein reductase] + O2 = an alcohol + oxidized [NADPH--hemoprotein reductase] + H2O + H(+)</text>
        <dbReference type="Rhea" id="RHEA:17149"/>
        <dbReference type="Rhea" id="RHEA-COMP:11964"/>
        <dbReference type="Rhea" id="RHEA-COMP:11965"/>
        <dbReference type="ChEBI" id="CHEBI:15377"/>
        <dbReference type="ChEBI" id="CHEBI:15378"/>
        <dbReference type="ChEBI" id="CHEBI:15379"/>
        <dbReference type="ChEBI" id="CHEBI:30879"/>
        <dbReference type="ChEBI" id="CHEBI:57618"/>
        <dbReference type="ChEBI" id="CHEBI:58210"/>
        <dbReference type="ChEBI" id="CHEBI:142491"/>
        <dbReference type="EC" id="1.14.14.1"/>
    </reaction>
    <physiologicalReaction direction="left-to-right" evidence="12">
        <dbReference type="Rhea" id="RHEA:17150"/>
    </physiologicalReaction>
</comment>
<comment type="catalytic activity">
    <reaction evidence="6">
        <text>(5Z,8Z,11Z,14Z)-eicosatetraenoate + reduced [NADPH--hemoprotein reductase] + O2 = (18R)-hydroxy-(5Z,8Z,11Z,14Z)-eicosatetraenoate + oxidized [NADPH--hemoprotein reductase] + H2O + H(+)</text>
        <dbReference type="Rhea" id="RHEA:48736"/>
        <dbReference type="Rhea" id="RHEA-COMP:11964"/>
        <dbReference type="Rhea" id="RHEA-COMP:11965"/>
        <dbReference type="ChEBI" id="CHEBI:15377"/>
        <dbReference type="ChEBI" id="CHEBI:15378"/>
        <dbReference type="ChEBI" id="CHEBI:15379"/>
        <dbReference type="ChEBI" id="CHEBI:32395"/>
        <dbReference type="ChEBI" id="CHEBI:57618"/>
        <dbReference type="ChEBI" id="CHEBI:58210"/>
        <dbReference type="ChEBI" id="CHEBI:90790"/>
    </reaction>
    <physiologicalReaction direction="left-to-right" evidence="12">
        <dbReference type="Rhea" id="RHEA:48737"/>
    </physiologicalReaction>
</comment>
<comment type="catalytic activity">
    <reaction evidence="9">
        <text>(4Z,7Z,10Z,13Z,16Z)-docosapentaenoate + reduced [NADPH--hemoprotein reductase] + O2 = 20-hydroxy-(4Z,7Z,10Z,13Z,16Z)-docosapentaenoate + oxidized [NADPH--hemoprotein reductase] + H2O + H(+)</text>
        <dbReference type="Rhea" id="RHEA:51112"/>
        <dbReference type="Rhea" id="RHEA-COMP:11964"/>
        <dbReference type="Rhea" id="RHEA-COMP:11965"/>
        <dbReference type="ChEBI" id="CHEBI:15377"/>
        <dbReference type="ChEBI" id="CHEBI:15378"/>
        <dbReference type="ChEBI" id="CHEBI:15379"/>
        <dbReference type="ChEBI" id="CHEBI:57618"/>
        <dbReference type="ChEBI" id="CHEBI:58210"/>
        <dbReference type="ChEBI" id="CHEBI:77226"/>
        <dbReference type="ChEBI" id="CHEBI:133939"/>
    </reaction>
    <physiologicalReaction direction="left-to-right" evidence="14">
        <dbReference type="Rhea" id="RHEA:51113"/>
    </physiologicalReaction>
</comment>
<comment type="catalytic activity">
    <reaction evidence="6">
        <text>prostaglandin H1 + reduced [NADPH--hemoprotein reductase] + O2 = 19-hydroxyprostaglandin H1 + oxidized [NADPH--hemoprotein reductase] + H2O + H(+)</text>
        <dbReference type="Rhea" id="RHEA:48796"/>
        <dbReference type="Rhea" id="RHEA-COMP:11964"/>
        <dbReference type="Rhea" id="RHEA-COMP:11965"/>
        <dbReference type="ChEBI" id="CHEBI:15377"/>
        <dbReference type="ChEBI" id="CHEBI:15378"/>
        <dbReference type="ChEBI" id="CHEBI:15379"/>
        <dbReference type="ChEBI" id="CHEBI:57618"/>
        <dbReference type="ChEBI" id="CHEBI:58210"/>
        <dbReference type="ChEBI" id="CHEBI:90793"/>
        <dbReference type="ChEBI" id="CHEBI:90801"/>
    </reaction>
    <physiologicalReaction direction="left-to-right" evidence="12">
        <dbReference type="Rhea" id="RHEA:48797"/>
    </physiologicalReaction>
</comment>
<comment type="catalytic activity">
    <reaction evidence="6">
        <text>prostaglandin H2 + reduced [NADPH--hemoprotein reductase] + O2 = 19-hydroxyprostaglandin H2 + oxidized [NADPH--hemoprotein reductase] + H2O + H(+)</text>
        <dbReference type="Rhea" id="RHEA:48776"/>
        <dbReference type="Rhea" id="RHEA-COMP:11964"/>
        <dbReference type="Rhea" id="RHEA-COMP:11965"/>
        <dbReference type="ChEBI" id="CHEBI:15377"/>
        <dbReference type="ChEBI" id="CHEBI:15378"/>
        <dbReference type="ChEBI" id="CHEBI:15379"/>
        <dbReference type="ChEBI" id="CHEBI:57405"/>
        <dbReference type="ChEBI" id="CHEBI:57618"/>
        <dbReference type="ChEBI" id="CHEBI:58210"/>
        <dbReference type="ChEBI" id="CHEBI:90797"/>
    </reaction>
    <physiologicalReaction direction="left-to-right" evidence="12">
        <dbReference type="Rhea" id="RHEA:48777"/>
    </physiologicalReaction>
</comment>
<comment type="catalytic activity">
    <reaction evidence="8">
        <text>prostaglandin I2 + reduced [NADPH--hemoprotein reductase] + O2 = 19-hydroxy-prostaglandin I2 + oxidized [NADPH--hemoprotein reductase] + H2O + H(+)</text>
        <dbReference type="Rhea" id="RHEA:53932"/>
        <dbReference type="Rhea" id="RHEA-COMP:11964"/>
        <dbReference type="Rhea" id="RHEA-COMP:11965"/>
        <dbReference type="ChEBI" id="CHEBI:15377"/>
        <dbReference type="ChEBI" id="CHEBI:15378"/>
        <dbReference type="ChEBI" id="CHEBI:15379"/>
        <dbReference type="ChEBI" id="CHEBI:57403"/>
        <dbReference type="ChEBI" id="CHEBI:57618"/>
        <dbReference type="ChEBI" id="CHEBI:58210"/>
        <dbReference type="ChEBI" id="CHEBI:137987"/>
    </reaction>
    <physiologicalReaction direction="left-to-right" evidence="13">
        <dbReference type="Rhea" id="RHEA:53933"/>
    </physiologicalReaction>
</comment>
<comment type="catalytic activity">
    <reaction evidence="9">
        <text>(4Z,7Z,10Z,13Z,16Z,19Z)-docosahexaenoate + reduced [NADPH--hemoprotein reductase] + O2 = 10,11-epoxy-(4Z,7Z,13Z,16Z,19Z)-docosapentaenoate + oxidized [NADPH--hemoprotein reductase] + H2O + H(+)</text>
        <dbReference type="Rhea" id="RHEA:51092"/>
        <dbReference type="Rhea" id="RHEA-COMP:11964"/>
        <dbReference type="Rhea" id="RHEA-COMP:11965"/>
        <dbReference type="ChEBI" id="CHEBI:15377"/>
        <dbReference type="ChEBI" id="CHEBI:15378"/>
        <dbReference type="ChEBI" id="CHEBI:15379"/>
        <dbReference type="ChEBI" id="CHEBI:57618"/>
        <dbReference type="ChEBI" id="CHEBI:58210"/>
        <dbReference type="ChEBI" id="CHEBI:77016"/>
        <dbReference type="ChEBI" id="CHEBI:133934"/>
    </reaction>
    <physiologicalReaction direction="left-to-right" evidence="14">
        <dbReference type="Rhea" id="RHEA:51093"/>
    </physiologicalReaction>
</comment>
<comment type="catalytic activity">
    <reaction evidence="9">
        <text>(4Z,7Z,10Z,13Z,16Z,19Z)-docosahexaenoate + reduced [NADPH--hemoprotein reductase] + O2 = 13,14-epoxy-(4Z,7Z,10Z,16Z,19Z)-docosapentaenoate + oxidized [NADPH--hemoprotein reductase] + H2O + H(+)</text>
        <dbReference type="Rhea" id="RHEA:51088"/>
        <dbReference type="Rhea" id="RHEA-COMP:11964"/>
        <dbReference type="Rhea" id="RHEA-COMP:11965"/>
        <dbReference type="ChEBI" id="CHEBI:15377"/>
        <dbReference type="ChEBI" id="CHEBI:15378"/>
        <dbReference type="ChEBI" id="CHEBI:15379"/>
        <dbReference type="ChEBI" id="CHEBI:57618"/>
        <dbReference type="ChEBI" id="CHEBI:58210"/>
        <dbReference type="ChEBI" id="CHEBI:77016"/>
        <dbReference type="ChEBI" id="CHEBI:133933"/>
    </reaction>
    <physiologicalReaction direction="left-to-right" evidence="14">
        <dbReference type="Rhea" id="RHEA:51089"/>
    </physiologicalReaction>
</comment>
<comment type="catalytic activity">
    <reaction evidence="9">
        <text>(4Z,7Z,10Z,13Z,16Z,19Z)-docosahexaenoate + reduced [NADPH--hemoprotein reductase] + O2 = 16,17-epoxy-(4Z,7Z,10Z,13Z,19Z)-docosapentaenoate + oxidized [NADPH--hemoprotein reductase] + H2O + H(+)</text>
        <dbReference type="Rhea" id="RHEA:51084"/>
        <dbReference type="Rhea" id="RHEA-COMP:11964"/>
        <dbReference type="Rhea" id="RHEA-COMP:11965"/>
        <dbReference type="ChEBI" id="CHEBI:15377"/>
        <dbReference type="ChEBI" id="CHEBI:15378"/>
        <dbReference type="ChEBI" id="CHEBI:15379"/>
        <dbReference type="ChEBI" id="CHEBI:57618"/>
        <dbReference type="ChEBI" id="CHEBI:58210"/>
        <dbReference type="ChEBI" id="CHEBI:77016"/>
        <dbReference type="ChEBI" id="CHEBI:133932"/>
    </reaction>
    <physiologicalReaction direction="left-to-right" evidence="14">
        <dbReference type="Rhea" id="RHEA:51085"/>
    </physiologicalReaction>
</comment>
<comment type="catalytic activity">
    <reaction evidence="9">
        <text>(4Z,7Z,10Z,13Z,16Z,19Z)-docosahexaenoate + reduced [NADPH--hemoprotein reductase] + O2 = 19,20-epoxy-(4Z,7Z,10Z,13Z,16Z)-docosapentaenoate + oxidized [NADPH--hemoprotein reductase] + H2O + H(+)</text>
        <dbReference type="Rhea" id="RHEA:51080"/>
        <dbReference type="Rhea" id="RHEA-COMP:11964"/>
        <dbReference type="Rhea" id="RHEA-COMP:11965"/>
        <dbReference type="ChEBI" id="CHEBI:15377"/>
        <dbReference type="ChEBI" id="CHEBI:15378"/>
        <dbReference type="ChEBI" id="CHEBI:15379"/>
        <dbReference type="ChEBI" id="CHEBI:57618"/>
        <dbReference type="ChEBI" id="CHEBI:58210"/>
        <dbReference type="ChEBI" id="CHEBI:77016"/>
        <dbReference type="ChEBI" id="CHEBI:133931"/>
    </reaction>
    <physiologicalReaction direction="left-to-right" evidence="14">
        <dbReference type="Rhea" id="RHEA:51081"/>
    </physiologicalReaction>
</comment>
<comment type="catalytic activity">
    <reaction evidence="9">
        <text>(7Z,10Z,13Z,16Z,19Z)-docosapentaenoate + reduced [NADPH--hemoprotein reductase] + O2 = 10,11-epoxy-(7Z,13Z,16Z,19Z)-docosatetraenoate + oxidized [NADPH--hemoprotein reductase] + H2O + H(+)</text>
        <dbReference type="Rhea" id="RHEA:51108"/>
        <dbReference type="Rhea" id="RHEA-COMP:11964"/>
        <dbReference type="Rhea" id="RHEA-COMP:11965"/>
        <dbReference type="ChEBI" id="CHEBI:15377"/>
        <dbReference type="ChEBI" id="CHEBI:15378"/>
        <dbReference type="ChEBI" id="CHEBI:15379"/>
        <dbReference type="ChEBI" id="CHEBI:57618"/>
        <dbReference type="ChEBI" id="CHEBI:58210"/>
        <dbReference type="ChEBI" id="CHEBI:77224"/>
        <dbReference type="ChEBI" id="CHEBI:133938"/>
    </reaction>
    <physiologicalReaction direction="left-to-right" evidence="14">
        <dbReference type="Rhea" id="RHEA:51109"/>
    </physiologicalReaction>
</comment>
<comment type="catalytic activity">
    <reaction evidence="9">
        <text>(7Z,10Z,13Z,16Z,19Z)-docosapentaenoate + reduced [NADPH--hemoprotein reductase] + O2 = 13,14-epoxy-(7Z,10Z,16Z,19Z)-docosatetraenoate + oxidized [NADPH--hemoprotein reductase] + H2O + H(+)</text>
        <dbReference type="Rhea" id="RHEA:51104"/>
        <dbReference type="Rhea" id="RHEA-COMP:11964"/>
        <dbReference type="Rhea" id="RHEA-COMP:11965"/>
        <dbReference type="ChEBI" id="CHEBI:15377"/>
        <dbReference type="ChEBI" id="CHEBI:15378"/>
        <dbReference type="ChEBI" id="CHEBI:15379"/>
        <dbReference type="ChEBI" id="CHEBI:57618"/>
        <dbReference type="ChEBI" id="CHEBI:58210"/>
        <dbReference type="ChEBI" id="CHEBI:77224"/>
        <dbReference type="ChEBI" id="CHEBI:133937"/>
    </reaction>
    <physiologicalReaction direction="left-to-right" evidence="14">
        <dbReference type="Rhea" id="RHEA:51105"/>
    </physiologicalReaction>
</comment>
<comment type="catalytic activity">
    <reaction evidence="9">
        <text>(7Z,10Z,13Z,16Z,19Z)-docosapentaenoate + reduced [NADPH--hemoprotein reductase] + O2 = 16,17-epoxy-(7Z,10Z,13Z,19Z)-docosatetraenoate + oxidized [NADPH--hemoprotein reductase] + H2O + H(+)</text>
        <dbReference type="Rhea" id="RHEA:51100"/>
        <dbReference type="Rhea" id="RHEA-COMP:11964"/>
        <dbReference type="Rhea" id="RHEA-COMP:11965"/>
        <dbReference type="ChEBI" id="CHEBI:15377"/>
        <dbReference type="ChEBI" id="CHEBI:15378"/>
        <dbReference type="ChEBI" id="CHEBI:15379"/>
        <dbReference type="ChEBI" id="CHEBI:57618"/>
        <dbReference type="ChEBI" id="CHEBI:58210"/>
        <dbReference type="ChEBI" id="CHEBI:77224"/>
        <dbReference type="ChEBI" id="CHEBI:133936"/>
    </reaction>
    <physiologicalReaction direction="left-to-right" evidence="14">
        <dbReference type="Rhea" id="RHEA:51101"/>
    </physiologicalReaction>
</comment>
<comment type="catalytic activity">
    <reaction evidence="9">
        <text>(7Z,10Z,13Z,16Z,19Z)-docosapentaenoate + reduced [NADPH--hemoprotein reductase] + O2 = 19,20-epoxy-(7Z,10Z,13Z,16Z)-docosatetraenoate + oxidized [NADPH--hemoprotein reductase] + H2O + H(+)</text>
        <dbReference type="Rhea" id="RHEA:51096"/>
        <dbReference type="Rhea" id="RHEA-COMP:11964"/>
        <dbReference type="Rhea" id="RHEA-COMP:11965"/>
        <dbReference type="ChEBI" id="CHEBI:15377"/>
        <dbReference type="ChEBI" id="CHEBI:15378"/>
        <dbReference type="ChEBI" id="CHEBI:15379"/>
        <dbReference type="ChEBI" id="CHEBI:57618"/>
        <dbReference type="ChEBI" id="CHEBI:58210"/>
        <dbReference type="ChEBI" id="CHEBI:77224"/>
        <dbReference type="ChEBI" id="CHEBI:133935"/>
    </reaction>
    <physiologicalReaction direction="left-to-right" evidence="14">
        <dbReference type="Rhea" id="RHEA:51097"/>
    </physiologicalReaction>
</comment>
<comment type="cofactor">
    <cofactor evidence="2">
        <name>heme</name>
        <dbReference type="ChEBI" id="CHEBI:30413"/>
    </cofactor>
</comment>
<comment type="biophysicochemical properties">
    <kinetics>
        <KM evidence="6">7 uM for 9-alpha,11-alpha-epoxymethano-PGH2 (U-44069)</KM>
        <KM evidence="8">40 uM for 6,9-alpha-methylene-PGI2</KM>
        <Vmax evidence="6">260.0 pmol/min/pmol enzyme with 9-alpha,11-alpha-epoxymethano-PGH2 (U-44069)</Vmax>
    </kinetics>
</comment>
<comment type="pathway">
    <text evidence="6">Lipid metabolism; fatty acid metabolism.</text>
</comment>
<comment type="subcellular location">
    <subcellularLocation>
        <location evidence="3">Endoplasmic reticulum membrane</location>
        <topology evidence="3">Single-pass membrane protein</topology>
    </subcellularLocation>
    <subcellularLocation>
        <location evidence="3">Microsome membrane</location>
        <topology evidence="3">Single-pass membrane protein</topology>
    </subcellularLocation>
</comment>
<comment type="tissue specificity">
    <text evidence="5 7 8">Expressed in the epithelium of seminal vesicles, in renal cortex, in adult and fetal liver, in epidermis, in corneal epithelium, in sweat glands, hair follicles, epithelial linings of the ampulla of vas deferens and of the stomach and small intestine, as well as in the transitional epithelium of the bladder and ureter (at protein level). In the epidermis, expressed from the basal cell to the granular cell layers. In the corneal epithelium, expressed in all cell layers. Also detected in prostate. Up-regulated in the epidermis of psoriatic lesions.</text>
</comment>
<comment type="similarity">
    <text evidence="11">Belongs to the cytochrome P450 family.</text>
</comment>
<organism>
    <name type="scientific">Homo sapiens</name>
    <name type="common">Human</name>
    <dbReference type="NCBI Taxonomy" id="9606"/>
    <lineage>
        <taxon>Eukaryota</taxon>
        <taxon>Metazoa</taxon>
        <taxon>Chordata</taxon>
        <taxon>Craniata</taxon>
        <taxon>Vertebrata</taxon>
        <taxon>Euteleostomi</taxon>
        <taxon>Mammalia</taxon>
        <taxon>Eutheria</taxon>
        <taxon>Euarchontoglires</taxon>
        <taxon>Primates</taxon>
        <taxon>Haplorrhini</taxon>
        <taxon>Catarrhini</taxon>
        <taxon>Hominidae</taxon>
        <taxon>Homo</taxon>
    </lineage>
</organism>